<evidence type="ECO:0000255" key="1">
    <source>
        <dbReference type="HAMAP-Rule" id="MF_00075"/>
    </source>
</evidence>
<gene>
    <name evidence="1" type="primary">infA</name>
    <name type="ordered locus">CA_C3109</name>
</gene>
<dbReference type="EMBL" id="AE001437">
    <property type="protein sequence ID" value="AAK81049.1"/>
    <property type="molecule type" value="Genomic_DNA"/>
</dbReference>
<dbReference type="PIR" id="F97282">
    <property type="entry name" value="F97282"/>
</dbReference>
<dbReference type="RefSeq" id="NP_349709.1">
    <property type="nucleotide sequence ID" value="NC_003030.1"/>
</dbReference>
<dbReference type="RefSeq" id="WP_010966389.1">
    <property type="nucleotide sequence ID" value="NC_003030.1"/>
</dbReference>
<dbReference type="SMR" id="Q97EK1"/>
<dbReference type="STRING" id="272562.CA_C3109"/>
<dbReference type="GeneID" id="44999596"/>
<dbReference type="KEGG" id="cac:CA_C3109"/>
<dbReference type="PATRIC" id="fig|272562.8.peg.3292"/>
<dbReference type="eggNOG" id="COG0361">
    <property type="taxonomic scope" value="Bacteria"/>
</dbReference>
<dbReference type="HOGENOM" id="CLU_151267_1_0_9"/>
<dbReference type="OrthoDB" id="9803250at2"/>
<dbReference type="Proteomes" id="UP000000814">
    <property type="component" value="Chromosome"/>
</dbReference>
<dbReference type="GO" id="GO:0005829">
    <property type="term" value="C:cytosol"/>
    <property type="evidence" value="ECO:0007669"/>
    <property type="project" value="TreeGrafter"/>
</dbReference>
<dbReference type="GO" id="GO:0043022">
    <property type="term" value="F:ribosome binding"/>
    <property type="evidence" value="ECO:0007669"/>
    <property type="project" value="UniProtKB-UniRule"/>
</dbReference>
<dbReference type="GO" id="GO:0019843">
    <property type="term" value="F:rRNA binding"/>
    <property type="evidence" value="ECO:0007669"/>
    <property type="project" value="UniProtKB-UniRule"/>
</dbReference>
<dbReference type="GO" id="GO:0003743">
    <property type="term" value="F:translation initiation factor activity"/>
    <property type="evidence" value="ECO:0007669"/>
    <property type="project" value="UniProtKB-UniRule"/>
</dbReference>
<dbReference type="CDD" id="cd04451">
    <property type="entry name" value="S1_IF1"/>
    <property type="match status" value="1"/>
</dbReference>
<dbReference type="FunFam" id="2.40.50.140:FF:000002">
    <property type="entry name" value="Translation initiation factor IF-1"/>
    <property type="match status" value="1"/>
</dbReference>
<dbReference type="Gene3D" id="2.40.50.140">
    <property type="entry name" value="Nucleic acid-binding proteins"/>
    <property type="match status" value="1"/>
</dbReference>
<dbReference type="HAMAP" id="MF_00075">
    <property type="entry name" value="IF_1"/>
    <property type="match status" value="1"/>
</dbReference>
<dbReference type="InterPro" id="IPR012340">
    <property type="entry name" value="NA-bd_OB-fold"/>
</dbReference>
<dbReference type="InterPro" id="IPR006196">
    <property type="entry name" value="RNA-binding_domain_S1_IF1"/>
</dbReference>
<dbReference type="InterPro" id="IPR003029">
    <property type="entry name" value="S1_domain"/>
</dbReference>
<dbReference type="InterPro" id="IPR004368">
    <property type="entry name" value="TIF_IF1"/>
</dbReference>
<dbReference type="NCBIfam" id="TIGR00008">
    <property type="entry name" value="infA"/>
    <property type="match status" value="1"/>
</dbReference>
<dbReference type="PANTHER" id="PTHR33370">
    <property type="entry name" value="TRANSLATION INITIATION FACTOR IF-1, CHLOROPLASTIC"/>
    <property type="match status" value="1"/>
</dbReference>
<dbReference type="PANTHER" id="PTHR33370:SF1">
    <property type="entry name" value="TRANSLATION INITIATION FACTOR IF-1, CHLOROPLASTIC"/>
    <property type="match status" value="1"/>
</dbReference>
<dbReference type="Pfam" id="PF01176">
    <property type="entry name" value="eIF-1a"/>
    <property type="match status" value="1"/>
</dbReference>
<dbReference type="SMART" id="SM00316">
    <property type="entry name" value="S1"/>
    <property type="match status" value="1"/>
</dbReference>
<dbReference type="SUPFAM" id="SSF50249">
    <property type="entry name" value="Nucleic acid-binding proteins"/>
    <property type="match status" value="1"/>
</dbReference>
<dbReference type="PROSITE" id="PS50832">
    <property type="entry name" value="S1_IF1_TYPE"/>
    <property type="match status" value="1"/>
</dbReference>
<comment type="function">
    <text evidence="1">One of the essential components for the initiation of protein synthesis. Stabilizes the binding of IF-2 and IF-3 on the 30S subunit to which N-formylmethionyl-tRNA(fMet) subsequently binds. Helps modulate mRNA selection, yielding the 30S pre-initiation complex (PIC). Upon addition of the 50S ribosomal subunit IF-1, IF-2 and IF-3 are released leaving the mature 70S translation initiation complex.</text>
</comment>
<comment type="subunit">
    <text evidence="1">Component of the 30S ribosomal translation pre-initiation complex which assembles on the 30S ribosome in the order IF-2 and IF-3, IF-1 and N-formylmethionyl-tRNA(fMet); mRNA recruitment can occur at any time during PIC assembly.</text>
</comment>
<comment type="subcellular location">
    <subcellularLocation>
        <location evidence="1">Cytoplasm</location>
    </subcellularLocation>
</comment>
<comment type="similarity">
    <text evidence="1">Belongs to the IF-1 family.</text>
</comment>
<proteinExistence type="inferred from homology"/>
<reference key="1">
    <citation type="journal article" date="2001" name="J. Bacteriol.">
        <title>Genome sequence and comparative analysis of the solvent-producing bacterium Clostridium acetobutylicum.</title>
        <authorList>
            <person name="Noelling J."/>
            <person name="Breton G."/>
            <person name="Omelchenko M.V."/>
            <person name="Makarova K.S."/>
            <person name="Zeng Q."/>
            <person name="Gibson R."/>
            <person name="Lee H.M."/>
            <person name="Dubois J."/>
            <person name="Qiu D."/>
            <person name="Hitti J."/>
            <person name="Wolf Y.I."/>
            <person name="Tatusov R.L."/>
            <person name="Sabathe F."/>
            <person name="Doucette-Stamm L.A."/>
            <person name="Soucaille P."/>
            <person name="Daly M.J."/>
            <person name="Bennett G.N."/>
            <person name="Koonin E.V."/>
            <person name="Smith D.R."/>
        </authorList>
    </citation>
    <scope>NUCLEOTIDE SEQUENCE [LARGE SCALE GENOMIC DNA]</scope>
    <source>
        <strain>ATCC 824 / DSM 792 / JCM 1419 / IAM 19013 / LMG 5710 / NBRC 13948 / NRRL B-527 / VKM B-1787 / 2291 / W</strain>
    </source>
</reference>
<keyword id="KW-0963">Cytoplasm</keyword>
<keyword id="KW-0396">Initiation factor</keyword>
<keyword id="KW-0648">Protein biosynthesis</keyword>
<keyword id="KW-1185">Reference proteome</keyword>
<keyword id="KW-0694">RNA-binding</keyword>
<keyword id="KW-0699">rRNA-binding</keyword>
<protein>
    <recommendedName>
        <fullName evidence="1">Translation initiation factor IF-1</fullName>
    </recommendedName>
</protein>
<sequence length="72" mass="8189">MSKEDVIEMQGTVLESLPNAMFEVELESGQKILAHISGKLRMNFIRILPGDKVTVELSPYDLTRGRITWRAK</sequence>
<name>IF1_CLOAB</name>
<feature type="chain" id="PRO_0000095775" description="Translation initiation factor IF-1">
    <location>
        <begin position="1"/>
        <end position="72"/>
    </location>
</feature>
<feature type="domain" description="S1-like" evidence="1">
    <location>
        <begin position="1"/>
        <end position="72"/>
    </location>
</feature>
<accession>Q97EK1</accession>
<organism>
    <name type="scientific">Clostridium acetobutylicum (strain ATCC 824 / DSM 792 / JCM 1419 / IAM 19013 / LMG 5710 / NBRC 13948 / NRRL B-527 / VKM B-1787 / 2291 / W)</name>
    <dbReference type="NCBI Taxonomy" id="272562"/>
    <lineage>
        <taxon>Bacteria</taxon>
        <taxon>Bacillati</taxon>
        <taxon>Bacillota</taxon>
        <taxon>Clostridia</taxon>
        <taxon>Eubacteriales</taxon>
        <taxon>Clostridiaceae</taxon>
        <taxon>Clostridium</taxon>
    </lineage>
</organism>